<accession>Q8DD23</accession>
<reference key="1">
    <citation type="submission" date="2002-12" db="EMBL/GenBank/DDBJ databases">
        <title>Complete genome sequence of Vibrio vulnificus CMCP6.</title>
        <authorList>
            <person name="Rhee J.H."/>
            <person name="Kim S.Y."/>
            <person name="Chung S.S."/>
            <person name="Kim J.J."/>
            <person name="Moon Y.H."/>
            <person name="Jeong H."/>
            <person name="Choy H.E."/>
        </authorList>
    </citation>
    <scope>NUCLEOTIDE SEQUENCE [LARGE SCALE GENOMIC DNA]</scope>
    <source>
        <strain>CMCP6</strain>
    </source>
</reference>
<organism>
    <name type="scientific">Vibrio vulnificus (strain CMCP6)</name>
    <dbReference type="NCBI Taxonomy" id="216895"/>
    <lineage>
        <taxon>Bacteria</taxon>
        <taxon>Pseudomonadati</taxon>
        <taxon>Pseudomonadota</taxon>
        <taxon>Gammaproteobacteria</taxon>
        <taxon>Vibrionales</taxon>
        <taxon>Vibrionaceae</taxon>
        <taxon>Vibrio</taxon>
    </lineage>
</organism>
<evidence type="ECO:0000255" key="1">
    <source>
        <dbReference type="HAMAP-Rule" id="MF_01318"/>
    </source>
</evidence>
<evidence type="ECO:0000305" key="2"/>
<keyword id="KW-0678">Repressor</keyword>
<keyword id="KW-0687">Ribonucleoprotein</keyword>
<keyword id="KW-0689">Ribosomal protein</keyword>
<keyword id="KW-0694">RNA-binding</keyword>
<keyword id="KW-0699">rRNA-binding</keyword>
<keyword id="KW-0810">Translation regulation</keyword>
<keyword id="KW-0820">tRNA-binding</keyword>
<gene>
    <name evidence="1" type="primary">rplA</name>
    <name type="ordered locus">VV1_1208</name>
</gene>
<proteinExistence type="inferred from homology"/>
<feature type="chain" id="PRO_0000125774" description="Large ribosomal subunit protein uL1">
    <location>
        <begin position="1"/>
        <end position="233"/>
    </location>
</feature>
<name>RL1_VIBVU</name>
<protein>
    <recommendedName>
        <fullName evidence="1">Large ribosomal subunit protein uL1</fullName>
    </recommendedName>
    <alternativeName>
        <fullName evidence="2">50S ribosomal protein L1</fullName>
    </alternativeName>
</protein>
<dbReference type="EMBL" id="AE016795">
    <property type="protein sequence ID" value="AAO09668.1"/>
    <property type="molecule type" value="Genomic_DNA"/>
</dbReference>
<dbReference type="RefSeq" id="WP_011079198.1">
    <property type="nucleotide sequence ID" value="NC_004459.3"/>
</dbReference>
<dbReference type="SMR" id="Q8DD23"/>
<dbReference type="KEGG" id="vvu:VV1_1208"/>
<dbReference type="HOGENOM" id="CLU_062853_0_0_6"/>
<dbReference type="Proteomes" id="UP000002275">
    <property type="component" value="Chromosome 1"/>
</dbReference>
<dbReference type="GO" id="GO:0022625">
    <property type="term" value="C:cytosolic large ribosomal subunit"/>
    <property type="evidence" value="ECO:0007669"/>
    <property type="project" value="TreeGrafter"/>
</dbReference>
<dbReference type="GO" id="GO:0019843">
    <property type="term" value="F:rRNA binding"/>
    <property type="evidence" value="ECO:0007669"/>
    <property type="project" value="UniProtKB-UniRule"/>
</dbReference>
<dbReference type="GO" id="GO:0003735">
    <property type="term" value="F:structural constituent of ribosome"/>
    <property type="evidence" value="ECO:0007669"/>
    <property type="project" value="InterPro"/>
</dbReference>
<dbReference type="GO" id="GO:0000049">
    <property type="term" value="F:tRNA binding"/>
    <property type="evidence" value="ECO:0007669"/>
    <property type="project" value="UniProtKB-KW"/>
</dbReference>
<dbReference type="GO" id="GO:0006417">
    <property type="term" value="P:regulation of translation"/>
    <property type="evidence" value="ECO:0007669"/>
    <property type="project" value="UniProtKB-KW"/>
</dbReference>
<dbReference type="GO" id="GO:0006412">
    <property type="term" value="P:translation"/>
    <property type="evidence" value="ECO:0007669"/>
    <property type="project" value="UniProtKB-UniRule"/>
</dbReference>
<dbReference type="CDD" id="cd00403">
    <property type="entry name" value="Ribosomal_L1"/>
    <property type="match status" value="1"/>
</dbReference>
<dbReference type="FunFam" id="3.40.50.790:FF:000001">
    <property type="entry name" value="50S ribosomal protein L1"/>
    <property type="match status" value="1"/>
</dbReference>
<dbReference type="Gene3D" id="3.30.190.20">
    <property type="match status" value="1"/>
</dbReference>
<dbReference type="Gene3D" id="3.40.50.790">
    <property type="match status" value="1"/>
</dbReference>
<dbReference type="HAMAP" id="MF_01318_B">
    <property type="entry name" value="Ribosomal_uL1_B"/>
    <property type="match status" value="1"/>
</dbReference>
<dbReference type="InterPro" id="IPR005878">
    <property type="entry name" value="Ribosom_uL1_bac-type"/>
</dbReference>
<dbReference type="InterPro" id="IPR002143">
    <property type="entry name" value="Ribosomal_uL1"/>
</dbReference>
<dbReference type="InterPro" id="IPR023674">
    <property type="entry name" value="Ribosomal_uL1-like"/>
</dbReference>
<dbReference type="InterPro" id="IPR028364">
    <property type="entry name" value="Ribosomal_uL1/biogenesis"/>
</dbReference>
<dbReference type="InterPro" id="IPR016095">
    <property type="entry name" value="Ribosomal_uL1_3-a/b-sand"/>
</dbReference>
<dbReference type="InterPro" id="IPR023673">
    <property type="entry name" value="Ribosomal_uL1_CS"/>
</dbReference>
<dbReference type="NCBIfam" id="TIGR01169">
    <property type="entry name" value="rplA_bact"/>
    <property type="match status" value="1"/>
</dbReference>
<dbReference type="PANTHER" id="PTHR36427">
    <property type="entry name" value="54S RIBOSOMAL PROTEIN L1, MITOCHONDRIAL"/>
    <property type="match status" value="1"/>
</dbReference>
<dbReference type="PANTHER" id="PTHR36427:SF3">
    <property type="entry name" value="LARGE RIBOSOMAL SUBUNIT PROTEIN UL1M"/>
    <property type="match status" value="1"/>
</dbReference>
<dbReference type="Pfam" id="PF00687">
    <property type="entry name" value="Ribosomal_L1"/>
    <property type="match status" value="1"/>
</dbReference>
<dbReference type="PIRSF" id="PIRSF002155">
    <property type="entry name" value="Ribosomal_L1"/>
    <property type="match status" value="1"/>
</dbReference>
<dbReference type="SUPFAM" id="SSF56808">
    <property type="entry name" value="Ribosomal protein L1"/>
    <property type="match status" value="1"/>
</dbReference>
<dbReference type="PROSITE" id="PS01199">
    <property type="entry name" value="RIBOSOMAL_L1"/>
    <property type="match status" value="1"/>
</dbReference>
<sequence>MAKLTKRMRVIREKVDVTREYEINEAVALLKELATAKFVESVDVAVNLGIDARKSDQNVRGATVLPHGTGRDIRVAVFAQGANAEAAKEAGADIVGMEDLAEQVKKGEMNFDVVVASPDAMRVVGQLGTILGPRGLMPNPKVGTVTPNVAEAVKNAKAGQVRYRNDKNGIIHTTIGKVDFSAEQIKENLEALLVALKKAKPSSAKGSYLKKVSISTTMGAGVAVDQGTLNTQA</sequence>
<comment type="function">
    <text evidence="1">Binds directly to 23S rRNA. The L1 stalk is quite mobile in the ribosome, and is involved in E site tRNA release.</text>
</comment>
<comment type="function">
    <text evidence="1">Protein L1 is also a translational repressor protein, it controls the translation of the L11 operon by binding to its mRNA.</text>
</comment>
<comment type="subunit">
    <text evidence="1">Part of the 50S ribosomal subunit.</text>
</comment>
<comment type="similarity">
    <text evidence="1">Belongs to the universal ribosomal protein uL1 family.</text>
</comment>